<comment type="similarity">
    <text evidence="1">Belongs to the UPF0178 family.</text>
</comment>
<gene>
    <name type="ordered locus">amb2838</name>
</gene>
<reference key="1">
    <citation type="journal article" date="2005" name="DNA Res.">
        <title>Complete genome sequence of the facultative anaerobic magnetotactic bacterium Magnetospirillum sp. strain AMB-1.</title>
        <authorList>
            <person name="Matsunaga T."/>
            <person name="Okamura Y."/>
            <person name="Fukuda Y."/>
            <person name="Wahyudi A.T."/>
            <person name="Murase Y."/>
            <person name="Takeyama H."/>
        </authorList>
    </citation>
    <scope>NUCLEOTIDE SEQUENCE [LARGE SCALE GENOMIC DNA]</scope>
    <source>
        <strain>ATCC 700264 / AMB-1</strain>
    </source>
</reference>
<organism>
    <name type="scientific">Paramagnetospirillum magneticum (strain ATCC 700264 / AMB-1)</name>
    <name type="common">Magnetospirillum magneticum</name>
    <dbReference type="NCBI Taxonomy" id="342108"/>
    <lineage>
        <taxon>Bacteria</taxon>
        <taxon>Pseudomonadati</taxon>
        <taxon>Pseudomonadota</taxon>
        <taxon>Alphaproteobacteria</taxon>
        <taxon>Rhodospirillales</taxon>
        <taxon>Magnetospirillaceae</taxon>
        <taxon>Paramagnetospirillum</taxon>
    </lineage>
</organism>
<name>Y2838_PARM1</name>
<proteinExistence type="inferred from homology"/>
<feature type="chain" id="PRO_0000241816" description="UPF0178 protein amb2838">
    <location>
        <begin position="1"/>
        <end position="151"/>
    </location>
</feature>
<protein>
    <recommendedName>
        <fullName evidence="1">UPF0178 protein amb2838</fullName>
    </recommendedName>
</protein>
<sequence length="151" mass="16370">MTKIYIDGDACPVKDEVFKVAGRYGLAVTVVGNAWLRLPQDPMITMIVVPEGPDAADDRIAELIEPGDICITNDIPLGSRCLIKRALVLRPNGKPMTENSIGDALATRDLMNTLREIGTMTGGPPPFAKADRSRFLSALDTMVHQAKRVVP</sequence>
<dbReference type="EMBL" id="AP007255">
    <property type="protein sequence ID" value="BAE51642.1"/>
    <property type="molecule type" value="Genomic_DNA"/>
</dbReference>
<dbReference type="RefSeq" id="WP_011385215.1">
    <property type="nucleotide sequence ID" value="NC_007626.1"/>
</dbReference>
<dbReference type="SMR" id="Q2W3D3"/>
<dbReference type="STRING" id="342108.amb2838"/>
<dbReference type="KEGG" id="mag:amb2838"/>
<dbReference type="HOGENOM" id="CLU_106619_2_1_5"/>
<dbReference type="OrthoDB" id="9798918at2"/>
<dbReference type="Proteomes" id="UP000007058">
    <property type="component" value="Chromosome"/>
</dbReference>
<dbReference type="CDD" id="cd18720">
    <property type="entry name" value="PIN_YqxD-like"/>
    <property type="match status" value="1"/>
</dbReference>
<dbReference type="HAMAP" id="MF_00489">
    <property type="entry name" value="UPF0178"/>
    <property type="match status" value="1"/>
</dbReference>
<dbReference type="InterPro" id="IPR003791">
    <property type="entry name" value="UPF0178"/>
</dbReference>
<dbReference type="NCBIfam" id="NF001095">
    <property type="entry name" value="PRK00124.1"/>
    <property type="match status" value="1"/>
</dbReference>
<dbReference type="PANTHER" id="PTHR35146">
    <property type="entry name" value="UPF0178 PROTEIN YAII"/>
    <property type="match status" value="1"/>
</dbReference>
<dbReference type="PANTHER" id="PTHR35146:SF1">
    <property type="entry name" value="UPF0178 PROTEIN YAII"/>
    <property type="match status" value="1"/>
</dbReference>
<dbReference type="Pfam" id="PF02639">
    <property type="entry name" value="DUF188"/>
    <property type="match status" value="1"/>
</dbReference>
<accession>Q2W3D3</accession>
<evidence type="ECO:0000255" key="1">
    <source>
        <dbReference type="HAMAP-Rule" id="MF_00489"/>
    </source>
</evidence>